<feature type="chain" id="PRO_0000454383" description="4-aminobenzoate N-oxygenase">
    <location>
        <begin position="1"/>
        <end position="336"/>
    </location>
</feature>
<feature type="binding site" evidence="6 16">
    <location>
        <position position="93"/>
    </location>
    <ligand>
        <name>4-nitrobenzoate</name>
        <dbReference type="ChEBI" id="CHEBI:142863"/>
    </ligand>
</feature>
<feature type="binding site" evidence="6 14 15 16 17">
    <location>
        <position position="101"/>
    </location>
    <ligand>
        <name>Fe cation</name>
        <dbReference type="ChEBI" id="CHEBI:24875"/>
        <label>1</label>
    </ligand>
</feature>
<feature type="binding site" evidence="6 14 15 16 17">
    <location>
        <position position="136"/>
    </location>
    <ligand>
        <name>Fe cation</name>
        <dbReference type="ChEBI" id="CHEBI:24875"/>
        <label>1</label>
    </ligand>
</feature>
<feature type="binding site" evidence="6 14 15 16 17">
    <location>
        <position position="136"/>
    </location>
    <ligand>
        <name>Fe cation</name>
        <dbReference type="ChEBI" id="CHEBI:24875"/>
        <label>2</label>
    </ligand>
</feature>
<feature type="binding site" evidence="6 14 15 16 17">
    <location>
        <position position="139"/>
    </location>
    <ligand>
        <name>Fe cation</name>
        <dbReference type="ChEBI" id="CHEBI:24875"/>
        <label>1</label>
    </ligand>
</feature>
<feature type="binding site" evidence="6 14 15 16 17">
    <location>
        <position position="196"/>
    </location>
    <ligand>
        <name>Fe cation</name>
        <dbReference type="ChEBI" id="CHEBI:24875"/>
        <label>2</label>
    </ligand>
</feature>
<feature type="binding site" evidence="6 16">
    <location>
        <position position="200"/>
    </location>
    <ligand>
        <name>4-nitrobenzoate</name>
        <dbReference type="ChEBI" id="CHEBI:142863"/>
    </ligand>
</feature>
<feature type="binding site" evidence="6 14 15 16 17">
    <location>
        <position position="223"/>
    </location>
    <ligand>
        <name>Fe cation</name>
        <dbReference type="ChEBI" id="CHEBI:24875"/>
        <label>1</label>
    </ligand>
</feature>
<feature type="binding site" evidence="6 14 15 16 17">
    <location>
        <position position="227"/>
    </location>
    <ligand>
        <name>Fe cation</name>
        <dbReference type="ChEBI" id="CHEBI:24875"/>
        <label>2</label>
    </ligand>
</feature>
<feature type="binding site" evidence="6 14 15 16 17">
    <location>
        <position position="230"/>
    </location>
    <ligand>
        <name>Fe cation</name>
        <dbReference type="ChEBI" id="CHEBI:24875"/>
        <label>2</label>
    </ligand>
</feature>
<feature type="mutagenesis site" description="Loss of activity." evidence="5">
    <original>R</original>
    <variation>A</variation>
    <location>
        <position position="96"/>
    </location>
</feature>
<feature type="mutagenesis site" description="3-fold increase in activity." evidence="5">
    <original>T</original>
    <variation>A</variation>
    <location>
        <position position="100"/>
    </location>
</feature>
<feature type="mutagenesis site" description="Retains 14% of activity." evidence="5">
    <original>T</original>
    <variation>L</variation>
    <location>
        <position position="100"/>
    </location>
</feature>
<feature type="mutagenesis site" description="Loss of activity." evidence="3">
    <original>E</original>
    <variation>A</variation>
    <location>
        <position position="101"/>
    </location>
</feature>
<feature type="mutagenesis site" description="Loss of activity." evidence="3">
    <original>D</original>
    <variation>A</variation>
    <location>
        <position position="135"/>
    </location>
</feature>
<feature type="mutagenesis site" description="Loss of activity." evidence="3">
    <original>E</original>
    <variation>A</variation>
    <location>
        <position position="136"/>
    </location>
</feature>
<feature type="mutagenesis site" description="Loss of activity." evidence="3">
    <original>H</original>
    <variation>A</variation>
    <location>
        <position position="139"/>
    </location>
</feature>
<feature type="mutagenesis site" description="Loss of activity." evidence="3">
    <original>E</original>
    <variation>A</variation>
    <location>
        <position position="196"/>
    </location>
</feature>
<feature type="mutagenesis site" description="3.5-fold increase in activity." evidence="5">
    <original>L</original>
    <variation>F</variation>
    <location>
        <position position="202"/>
    </location>
</feature>
<feature type="mutagenesis site" description="Loss of activity." evidence="3">
    <original>D</original>
    <variation>A</variation>
    <location>
        <position position="226"/>
    </location>
</feature>
<feature type="mutagenesis site" description="Loss of activity." evidence="3">
    <original>E</original>
    <variation>A</variation>
    <location>
        <position position="227"/>
    </location>
</feature>
<feature type="mutagenesis site" description="Loss of activity." evidence="3">
    <original>H</original>
    <variation>A</variation>
    <location>
        <position position="230"/>
    </location>
</feature>
<feature type="mutagenesis site" description="No change in activity." evidence="5">
    <original>F</original>
    <variation>A</variation>
    <location>
        <position position="264"/>
    </location>
</feature>
<feature type="mutagenesis site" description="Retains 80% of activity." evidence="5">
    <original>L</original>
    <variation>W</variation>
    <location>
        <position position="300"/>
    </location>
</feature>
<feature type="helix" evidence="19">
    <location>
        <begin position="26"/>
        <end position="38"/>
    </location>
</feature>
<feature type="helix" evidence="19">
    <location>
        <begin position="40"/>
        <end position="43"/>
    </location>
</feature>
<feature type="helix" evidence="19">
    <location>
        <begin position="47"/>
        <end position="51"/>
    </location>
</feature>
<feature type="helix" evidence="19">
    <location>
        <begin position="63"/>
        <end position="65"/>
    </location>
</feature>
<feature type="turn" evidence="19">
    <location>
        <begin position="67"/>
        <end position="70"/>
    </location>
</feature>
<feature type="helix" evidence="19">
    <location>
        <begin position="72"/>
        <end position="75"/>
    </location>
</feature>
<feature type="helix" evidence="19">
    <location>
        <begin position="79"/>
        <end position="103"/>
    </location>
</feature>
<feature type="helix" evidence="19">
    <location>
        <begin position="105"/>
        <end position="113"/>
    </location>
</feature>
<feature type="turn" evidence="19">
    <location>
        <begin position="118"/>
        <end position="121"/>
    </location>
</feature>
<feature type="helix" evidence="19">
    <location>
        <begin position="123"/>
        <end position="153"/>
    </location>
</feature>
<feature type="helix" evidence="19">
    <location>
        <begin position="166"/>
        <end position="175"/>
    </location>
</feature>
<feature type="helix" evidence="19">
    <location>
        <begin position="181"/>
        <end position="197"/>
    </location>
</feature>
<feature type="helix" evidence="19">
    <location>
        <begin position="201"/>
        <end position="207"/>
    </location>
</feature>
<feature type="strand" evidence="19">
    <location>
        <begin position="210"/>
        <end position="212"/>
    </location>
</feature>
<feature type="helix" evidence="19">
    <location>
        <begin position="214"/>
        <end position="244"/>
    </location>
</feature>
<feature type="helix" evidence="19">
    <location>
        <begin position="247"/>
        <end position="265"/>
    </location>
</feature>
<feature type="helix" evidence="19">
    <location>
        <begin position="270"/>
        <end position="279"/>
    </location>
</feature>
<feature type="helix" evidence="19">
    <location>
        <begin position="284"/>
        <end position="290"/>
    </location>
</feature>
<feature type="turn" evidence="18">
    <location>
        <begin position="295"/>
        <end position="298"/>
    </location>
</feature>
<feature type="helix" evidence="19">
    <location>
        <begin position="305"/>
        <end position="313"/>
    </location>
</feature>
<feature type="turn" evidence="19">
    <location>
        <begin position="317"/>
        <end position="319"/>
    </location>
</feature>
<name>AURF_STRTU</name>
<dbReference type="EC" id="1.14.99.68" evidence="2 3 6 7 8"/>
<dbReference type="EMBL" id="AJ575648">
    <property type="protein sequence ID" value="CAE02601.1"/>
    <property type="molecule type" value="Genomic_DNA"/>
</dbReference>
<dbReference type="PDB" id="2JCD">
    <property type="method" value="X-ray"/>
    <property type="resolution" value="2.11 A"/>
    <property type="chains" value="A/B=1-336"/>
</dbReference>
<dbReference type="PDB" id="3CHH">
    <property type="method" value="X-ray"/>
    <property type="resolution" value="2.00 A"/>
    <property type="chains" value="A/B=1-336"/>
</dbReference>
<dbReference type="PDB" id="3CHI">
    <property type="method" value="X-ray"/>
    <property type="resolution" value="2.10 A"/>
    <property type="chains" value="A/B=1-336"/>
</dbReference>
<dbReference type="PDB" id="3CHT">
    <property type="method" value="X-ray"/>
    <property type="resolution" value="2.00 A"/>
    <property type="chains" value="A/B=1-336"/>
</dbReference>
<dbReference type="PDB" id="3CHU">
    <property type="method" value="X-ray"/>
    <property type="resolution" value="2.20 A"/>
    <property type="chains" value="A/B=1-336"/>
</dbReference>
<dbReference type="PDBsum" id="2JCD"/>
<dbReference type="PDBsum" id="3CHH"/>
<dbReference type="PDBsum" id="3CHI"/>
<dbReference type="PDBsum" id="3CHT"/>
<dbReference type="PDBsum" id="3CHU"/>
<dbReference type="SMR" id="Q70KH9"/>
<dbReference type="DIP" id="DIP-46089N"/>
<dbReference type="KEGG" id="ag:CAE02601"/>
<dbReference type="BioCyc" id="MetaCyc:MONOMER-16310"/>
<dbReference type="BRENDA" id="1.14.99.68">
    <property type="organism ID" value="12297"/>
</dbReference>
<dbReference type="EvolutionaryTrace" id="Q70KH9"/>
<dbReference type="GO" id="GO:0042802">
    <property type="term" value="F:identical protein binding"/>
    <property type="evidence" value="ECO:0000353"/>
    <property type="project" value="IntAct"/>
</dbReference>
<dbReference type="GO" id="GO:0046872">
    <property type="term" value="F:metal ion binding"/>
    <property type="evidence" value="ECO:0007669"/>
    <property type="project" value="UniProtKB-KW"/>
</dbReference>
<dbReference type="GO" id="GO:0016491">
    <property type="term" value="F:oxidoreductase activity"/>
    <property type="evidence" value="ECO:0007669"/>
    <property type="project" value="UniProtKB-KW"/>
</dbReference>
<dbReference type="FunFam" id="1.10.620.20:FF:000033">
    <property type="entry name" value="Putative N-oxidase"/>
    <property type="match status" value="1"/>
</dbReference>
<dbReference type="Gene3D" id="1.10.620.20">
    <property type="entry name" value="Ribonucleotide Reductase, subunit A"/>
    <property type="match status" value="1"/>
</dbReference>
<dbReference type="InterPro" id="IPR025859">
    <property type="entry name" value="AurF/CmlI"/>
</dbReference>
<dbReference type="InterPro" id="IPR054674">
    <property type="entry name" value="Diiron_AurF"/>
</dbReference>
<dbReference type="InterPro" id="IPR012348">
    <property type="entry name" value="RNR-like"/>
</dbReference>
<dbReference type="NCBIfam" id="NF045603">
    <property type="entry name" value="diiron_AurF"/>
    <property type="match status" value="1"/>
</dbReference>
<dbReference type="Pfam" id="PF11583">
    <property type="entry name" value="AurF"/>
    <property type="match status" value="1"/>
</dbReference>
<gene>
    <name evidence="9" type="primary">aurF</name>
</gene>
<sequence length="336" mass="38083">MREEQPHLATTWAARGWVEEEGIGSATLGRLVRAWPRRAAVVNKADILDEWADYDTLVPDYPLEIVPFAEHPLFLAAEPHQRQRVLTGMWIGYNERVIATEQLIAEPAFDLVMHGVFPGSDDPLIRKSVQQAIVDESFHTYMHMLAIDRTRELRKISERPPQPELVTYRRLRRVLADMPEQWERDIAVLVWGAVAETCINALLALLARDATIQPMHSLITTLHLRDETAHGSIVVEVVRELYARMNEQQRRALVRCLPIALEAFAEQDLSALLLELNAAGIRGAEEIVGDLRSTAGGTRLVRDFSGARKMVEQLGLDDAVDFDFPERPDWSPHTPR</sequence>
<accession>Q70KH9</accession>
<organism>
    <name type="scientific">Streptomyces thioluteus</name>
    <dbReference type="NCBI Taxonomy" id="66431"/>
    <lineage>
        <taxon>Bacteria</taxon>
        <taxon>Bacillati</taxon>
        <taxon>Actinomycetota</taxon>
        <taxon>Actinomycetes</taxon>
        <taxon>Kitasatosporales</taxon>
        <taxon>Streptomycetaceae</taxon>
        <taxon>Streptomyces</taxon>
    </lineage>
</organism>
<reference key="1">
    <citation type="journal article" date="2003" name="Chem. Biol.">
        <title>Iteration as programmed event during polyketide assembly; molecular analysis of the aureothin biosynthesis gene cluster.</title>
        <authorList>
            <person name="He J."/>
            <person name="Hertweck C."/>
        </authorList>
    </citation>
    <scope>NUCLEOTIDE SEQUENCE [GENOMIC DNA]</scope>
    <scope>FUNCTION</scope>
    <scope>PATHWAY</scope>
    <source>
        <strain>HKI-227</strain>
    </source>
</reference>
<reference key="2">
    <citation type="journal article" date="2004" name="J. Am. Chem. Soc.">
        <title>Biosynthetic origin of the rare nitroaryl moiety of the polyketide antibiotic aureothin: involvement of an unprecedented N-oxygenase.</title>
        <authorList>
            <person name="He J."/>
            <person name="Hertweck C."/>
        </authorList>
    </citation>
    <scope>FUNCTION</scope>
    <scope>CATALYTIC ACTIVITY</scope>
    <scope>DISRUPTION PHENOTYPE</scope>
    <scope>PATHWAY</scope>
</reference>
<reference key="3">
    <citation type="journal article" date="2006" name="ChemBioChem">
        <title>A new class of arylamine oxygenases: evidence that p-aminobenzoate N-oxygenase (AurF) is a di-iron enzyme and further mechanistic studies.</title>
        <authorList>
            <person name="Simurdiak M."/>
            <person name="Lee J."/>
            <person name="Zhao H."/>
        </authorList>
    </citation>
    <scope>FUNCTION</scope>
    <scope>CATALYTIC ACTIVITY</scope>
    <scope>COFACTOR</scope>
    <scope>MUTAGENESIS OF GLU-101; ASP-135; GLU-136; HIS-139; GLU-196; ASP-226; GLU-227 AND HIS-230</scope>
    <source>
        <strain>ATCC 12310 / DSM 40027 / JCM 4087 / NBRC 13341 / NRRL B-1667 / NIHJ 26A</strain>
    </source>
</reference>
<reference key="4">
    <citation type="journal article" date="2007" name="Biochemistry">
        <title>AurF from Streptomyces thioluteus and a possible new family of manganese/iron oxygenases.</title>
        <authorList>
            <person name="Krebs C."/>
            <person name="Matthews M.L."/>
            <person name="Jiang W."/>
            <person name="Bollinger J.M. Jr."/>
        </authorList>
    </citation>
    <scope>COFACTOR</scope>
</reference>
<reference key="5">
    <citation type="journal article" date="2009" name="J. Am. Chem. Soc.">
        <title>A long-lived, substrate-hydroxylating peroxodiiron(III/III) intermediate in the amine oxygenase, AurF, from Streptomyces thioluteus.</title>
        <authorList>
            <person name="Korboukh V.K."/>
            <person name="Li N."/>
            <person name="Barr E.W."/>
            <person name="Bollinger J.M. Jr."/>
            <person name="Krebs C."/>
        </authorList>
    </citation>
    <scope>FUNCTION</scope>
    <scope>CATALYTIC ACTIVITY</scope>
    <scope>REACTION MECHANISM</scope>
    <scope>COFACTOR</scope>
</reference>
<reference key="6">
    <citation type="journal article" date="2010" name="Proc. Natl. Acad. Sci. U.S.A.">
        <title>Four-electron oxidation of p-hydroxylaminobenzoate to p-nitrobenzoate by a peroxodiferric complex in AurF from Streptomyces thioluteus.</title>
        <authorList>
            <person name="Li N."/>
            <person name="Korboukh V.K."/>
            <person name="Krebs C."/>
            <person name="Bollinger J.M. Jr."/>
        </authorList>
    </citation>
    <scope>FUNCTION</scope>
    <scope>CATALYTIC ACTIVITY</scope>
    <scope>REACTION MECHANISM</scope>
    <scope>COFACTOR</scope>
</reference>
<reference evidence="13" key="7">
    <citation type="journal article" date="2007" name="J. Mol. Biol.">
        <title>Structure and action of the N-oxygenase AurF from Streptomyces thioluteus.</title>
        <authorList>
            <person name="Zocher G."/>
            <person name="Winkler R."/>
            <person name="Hertweck C."/>
            <person name="Schulz G.E."/>
        </authorList>
    </citation>
    <scope>X-RAY CRYSTALLOGRAPHY (2.11 ANGSTROMS) IN COMPLEX WITH MANGANESE</scope>
    <scope>COFACTOR</scope>
    <scope>SUBUNIT</scope>
    <scope>MUTAGENESIS OF ARG-96; THR-100; LEU-202; PHE-264 AND LEU-300</scope>
</reference>
<reference evidence="14 15 16 17" key="8">
    <citation type="journal article" date="2008" name="Proc. Natl. Acad. Sci. U.S.A.">
        <title>In vitro reconstitution and crystal structure of p-aminobenzoate N-oxygenase (AurF) involved in aureothin biosynthesis.</title>
        <authorList>
            <person name="Choi Y.S."/>
            <person name="Zhang H."/>
            <person name="Brunzelle J.S."/>
            <person name="Nair S.K."/>
            <person name="Zhao H."/>
        </authorList>
    </citation>
    <scope>X-RAY CRYSTALLOGRAPHY (2.00 ANGSTROMS) IN COMPLEXES WITH IRON AND 4-NITROBENZOIC ACID</scope>
    <scope>FUNCTION</scope>
    <scope>CATALYTIC ACTIVITY</scope>
    <scope>BIOPHYSICOCHEMICAL PROPERTIES</scope>
    <scope>COFACTOR</scope>
    <scope>SUBUNIT</scope>
</reference>
<protein>
    <recommendedName>
        <fullName evidence="12">4-aminobenzoate N-oxygenase</fullName>
        <ecNumber evidence="2 3 6 7 8">1.14.99.68</ecNumber>
    </recommendedName>
    <alternativeName>
        <fullName evidence="10">N-oxygenase</fullName>
    </alternativeName>
    <alternativeName>
        <fullName evidence="12">Non-heme di-iron N-oxygenase</fullName>
    </alternativeName>
    <alternativeName>
        <fullName evidence="11">p-aminobenzoate oxygenase</fullName>
    </alternativeName>
</protein>
<proteinExistence type="evidence at protein level"/>
<evidence type="ECO:0000269" key="1">
    <source>
    </source>
</evidence>
<evidence type="ECO:0000269" key="2">
    <source>
    </source>
</evidence>
<evidence type="ECO:0000269" key="3">
    <source>
    </source>
</evidence>
<evidence type="ECO:0000269" key="4">
    <source>
    </source>
</evidence>
<evidence type="ECO:0000269" key="5">
    <source>
    </source>
</evidence>
<evidence type="ECO:0000269" key="6">
    <source>
    </source>
</evidence>
<evidence type="ECO:0000269" key="7">
    <source>
    </source>
</evidence>
<evidence type="ECO:0000269" key="8">
    <source>
    </source>
</evidence>
<evidence type="ECO:0000303" key="9">
    <source>
    </source>
</evidence>
<evidence type="ECO:0000303" key="10">
    <source>
    </source>
</evidence>
<evidence type="ECO:0000303" key="11">
    <source>
    </source>
</evidence>
<evidence type="ECO:0000305" key="12"/>
<evidence type="ECO:0007744" key="13">
    <source>
        <dbReference type="PDB" id="2JCD"/>
    </source>
</evidence>
<evidence type="ECO:0007744" key="14">
    <source>
        <dbReference type="PDB" id="3CHH"/>
    </source>
</evidence>
<evidence type="ECO:0007744" key="15">
    <source>
        <dbReference type="PDB" id="3CHI"/>
    </source>
</evidence>
<evidence type="ECO:0007744" key="16">
    <source>
        <dbReference type="PDB" id="3CHT"/>
    </source>
</evidence>
<evidence type="ECO:0007744" key="17">
    <source>
        <dbReference type="PDB" id="3CHU"/>
    </source>
</evidence>
<evidence type="ECO:0007829" key="18">
    <source>
        <dbReference type="PDB" id="2JCD"/>
    </source>
</evidence>
<evidence type="ECO:0007829" key="19">
    <source>
        <dbReference type="PDB" id="3CHH"/>
    </source>
</evidence>
<comment type="function">
    <text evidence="1 2 3 6 7 8">Involved in the biosynthesis of the polyketide antibiotic aureothin (PubMed:14700630, PubMed:15038705). Catalyzes the oxidation of p-aminobenzoate (pABA) to p-nitrobenzoate (pNBA), an unusual polyketide synthase starter unit (PubMed:15038705, PubMed:16927313, PubMed:18458342, PubMed:20798054). Reaction mechanism involves the generation of a peroxodiiron(III/III) intermediate, which effects the initial oxidation of p-aminobenzoate to p-hydroxylaminobenzoate (Ar-NHOH) (PubMed:19731912, PubMed:20798054). Ar-NHOH is then probably directly converted to the fully oxidized p-nitrobenzoate via a four-electron N-oxidation, bypassing the formation of a nitroso compound (PubMed:20798054).</text>
</comment>
<comment type="catalytic activity">
    <reaction evidence="2 3 6 7 8">
        <text>4-aminobenzoate + AH2 + 2 O2 = 4-nitrobenzoate + A + 2 H2O</text>
        <dbReference type="Rhea" id="RHEA:58888"/>
        <dbReference type="ChEBI" id="CHEBI:13193"/>
        <dbReference type="ChEBI" id="CHEBI:15377"/>
        <dbReference type="ChEBI" id="CHEBI:15379"/>
        <dbReference type="ChEBI" id="CHEBI:17499"/>
        <dbReference type="ChEBI" id="CHEBI:17836"/>
        <dbReference type="ChEBI" id="CHEBI:142863"/>
        <dbReference type="EC" id="1.14.99.68"/>
    </reaction>
    <physiologicalReaction direction="left-to-right" evidence="2 3 6 8">
        <dbReference type="Rhea" id="RHEA:58889"/>
    </physiologicalReaction>
</comment>
<comment type="cofactor">
    <cofactor evidence="3 6 7 8">
        <name>Fe(2+)</name>
        <dbReference type="ChEBI" id="CHEBI:29033"/>
    </cofactor>
    <text evidence="3 4 5 6 7 8">Contains a nonheme dinuclear iron cluster that stabilizes a peroxo intermediate (PubMed:16927313, PubMed:18458342, PubMed:19731912, PubMed:20798054). Was originally suggested to contain a binuclear manganese cluster or a heterodinuclear manganese/iron cluster (PubMed:17718517, PubMed:17765264).</text>
</comment>
<comment type="biophysicochemical properties">
    <kinetics>
        <KM evidence="6">5.24 uM for p-aminobenzoate</KM>
        <text evidence="6">kcat is 6.21 min(-1) with p-aminobenzoate as substrate.</text>
    </kinetics>
</comment>
<comment type="pathway">
    <text evidence="1 2">Antibiotic biosynthesis.</text>
</comment>
<comment type="subunit">
    <text evidence="5 6">Homodimer.</text>
</comment>
<comment type="interaction">
    <interactant intactId="EBI-15700476">
        <id>Q70KH9</id>
    </interactant>
    <interactant intactId="EBI-15700476">
        <id>Q70KH9</id>
        <label>aurF</label>
    </interactant>
    <organismsDiffer>false</organismsDiffer>
    <experiments>2</experiments>
</comment>
<comment type="disruption phenotype">
    <text evidence="2">Deletion of the gene abolishes both N-oxidation activity and aureothin production.</text>
</comment>
<comment type="similarity">
    <text evidence="12">Belongs to the AurF N-oxygenase family.</text>
</comment>
<keyword id="KW-0002">3D-structure</keyword>
<keyword id="KW-0408">Iron</keyword>
<keyword id="KW-0464">Manganese</keyword>
<keyword id="KW-0479">Metal-binding</keyword>
<keyword id="KW-0560">Oxidoreductase</keyword>